<name>ACPS_LEPCP</name>
<proteinExistence type="inferred from homology"/>
<accession>B1XZM3</accession>
<feature type="chain" id="PRO_1000093891" description="Holo-[acyl-carrier-protein] synthase">
    <location>
        <begin position="1"/>
        <end position="132"/>
    </location>
</feature>
<feature type="binding site" evidence="1">
    <location>
        <position position="8"/>
    </location>
    <ligand>
        <name>Mg(2+)</name>
        <dbReference type="ChEBI" id="CHEBI:18420"/>
    </ligand>
</feature>
<feature type="binding site" evidence="1">
    <location>
        <position position="62"/>
    </location>
    <ligand>
        <name>Mg(2+)</name>
        <dbReference type="ChEBI" id="CHEBI:18420"/>
    </ligand>
</feature>
<dbReference type="EC" id="2.7.8.7" evidence="1"/>
<dbReference type="EMBL" id="CP001013">
    <property type="protein sequence ID" value="ACB32869.1"/>
    <property type="molecule type" value="Genomic_DNA"/>
</dbReference>
<dbReference type="RefSeq" id="WP_012345631.1">
    <property type="nucleotide sequence ID" value="NC_010524.1"/>
</dbReference>
<dbReference type="SMR" id="B1XZM3"/>
<dbReference type="STRING" id="395495.Lcho_0594"/>
<dbReference type="KEGG" id="lch:Lcho_0594"/>
<dbReference type="eggNOG" id="COG0736">
    <property type="taxonomic scope" value="Bacteria"/>
</dbReference>
<dbReference type="HOGENOM" id="CLU_089696_3_1_4"/>
<dbReference type="OrthoDB" id="517356at2"/>
<dbReference type="Proteomes" id="UP000001693">
    <property type="component" value="Chromosome"/>
</dbReference>
<dbReference type="GO" id="GO:0005737">
    <property type="term" value="C:cytoplasm"/>
    <property type="evidence" value="ECO:0007669"/>
    <property type="project" value="UniProtKB-SubCell"/>
</dbReference>
<dbReference type="GO" id="GO:0008897">
    <property type="term" value="F:holo-[acyl-carrier-protein] synthase activity"/>
    <property type="evidence" value="ECO:0007669"/>
    <property type="project" value="UniProtKB-UniRule"/>
</dbReference>
<dbReference type="GO" id="GO:0000287">
    <property type="term" value="F:magnesium ion binding"/>
    <property type="evidence" value="ECO:0007669"/>
    <property type="project" value="UniProtKB-UniRule"/>
</dbReference>
<dbReference type="GO" id="GO:0006633">
    <property type="term" value="P:fatty acid biosynthetic process"/>
    <property type="evidence" value="ECO:0007669"/>
    <property type="project" value="UniProtKB-UniRule"/>
</dbReference>
<dbReference type="Gene3D" id="3.90.470.20">
    <property type="entry name" value="4'-phosphopantetheinyl transferase domain"/>
    <property type="match status" value="1"/>
</dbReference>
<dbReference type="HAMAP" id="MF_00101">
    <property type="entry name" value="AcpS"/>
    <property type="match status" value="1"/>
</dbReference>
<dbReference type="InterPro" id="IPR008278">
    <property type="entry name" value="4-PPantetheinyl_Trfase_dom"/>
</dbReference>
<dbReference type="InterPro" id="IPR037143">
    <property type="entry name" value="4-PPantetheinyl_Trfase_dom_sf"/>
</dbReference>
<dbReference type="InterPro" id="IPR002582">
    <property type="entry name" value="ACPS"/>
</dbReference>
<dbReference type="InterPro" id="IPR004568">
    <property type="entry name" value="Ppantetheine-prot_Trfase_dom"/>
</dbReference>
<dbReference type="NCBIfam" id="TIGR00516">
    <property type="entry name" value="acpS"/>
    <property type="match status" value="1"/>
</dbReference>
<dbReference type="NCBIfam" id="TIGR00556">
    <property type="entry name" value="pantethn_trn"/>
    <property type="match status" value="1"/>
</dbReference>
<dbReference type="Pfam" id="PF01648">
    <property type="entry name" value="ACPS"/>
    <property type="match status" value="1"/>
</dbReference>
<dbReference type="SUPFAM" id="SSF56214">
    <property type="entry name" value="4'-phosphopantetheinyl transferase"/>
    <property type="match status" value="1"/>
</dbReference>
<evidence type="ECO:0000255" key="1">
    <source>
        <dbReference type="HAMAP-Rule" id="MF_00101"/>
    </source>
</evidence>
<keyword id="KW-0963">Cytoplasm</keyword>
<keyword id="KW-0275">Fatty acid biosynthesis</keyword>
<keyword id="KW-0276">Fatty acid metabolism</keyword>
<keyword id="KW-0444">Lipid biosynthesis</keyword>
<keyword id="KW-0443">Lipid metabolism</keyword>
<keyword id="KW-0460">Magnesium</keyword>
<keyword id="KW-0479">Metal-binding</keyword>
<keyword id="KW-1185">Reference proteome</keyword>
<keyword id="KW-0808">Transferase</keyword>
<reference key="1">
    <citation type="submission" date="2008-03" db="EMBL/GenBank/DDBJ databases">
        <title>Complete sequence of Leptothrix cholodnii SP-6.</title>
        <authorList>
            <consortium name="US DOE Joint Genome Institute"/>
            <person name="Copeland A."/>
            <person name="Lucas S."/>
            <person name="Lapidus A."/>
            <person name="Glavina del Rio T."/>
            <person name="Dalin E."/>
            <person name="Tice H."/>
            <person name="Bruce D."/>
            <person name="Goodwin L."/>
            <person name="Pitluck S."/>
            <person name="Chertkov O."/>
            <person name="Brettin T."/>
            <person name="Detter J.C."/>
            <person name="Han C."/>
            <person name="Kuske C.R."/>
            <person name="Schmutz J."/>
            <person name="Larimer F."/>
            <person name="Land M."/>
            <person name="Hauser L."/>
            <person name="Kyrpides N."/>
            <person name="Lykidis A."/>
            <person name="Emerson D."/>
            <person name="Richardson P."/>
        </authorList>
    </citation>
    <scope>NUCLEOTIDE SEQUENCE [LARGE SCALE GENOMIC DNA]</scope>
    <source>
        <strain>ATCC 51168 / LMG 8142 / SP-6</strain>
    </source>
</reference>
<comment type="function">
    <text evidence="1">Transfers the 4'-phosphopantetheine moiety from coenzyme A to a Ser of acyl-carrier-protein.</text>
</comment>
<comment type="catalytic activity">
    <reaction evidence="1">
        <text>apo-[ACP] + CoA = holo-[ACP] + adenosine 3',5'-bisphosphate + H(+)</text>
        <dbReference type="Rhea" id="RHEA:12068"/>
        <dbReference type="Rhea" id="RHEA-COMP:9685"/>
        <dbReference type="Rhea" id="RHEA-COMP:9690"/>
        <dbReference type="ChEBI" id="CHEBI:15378"/>
        <dbReference type="ChEBI" id="CHEBI:29999"/>
        <dbReference type="ChEBI" id="CHEBI:57287"/>
        <dbReference type="ChEBI" id="CHEBI:58343"/>
        <dbReference type="ChEBI" id="CHEBI:64479"/>
        <dbReference type="EC" id="2.7.8.7"/>
    </reaction>
</comment>
<comment type="cofactor">
    <cofactor evidence="1">
        <name>Mg(2+)</name>
        <dbReference type="ChEBI" id="CHEBI:18420"/>
    </cofactor>
</comment>
<comment type="subcellular location">
    <subcellularLocation>
        <location evidence="1">Cytoplasm</location>
    </subcellularLocation>
</comment>
<comment type="similarity">
    <text evidence="1">Belongs to the P-Pant transferase superfamily. AcpS family.</text>
</comment>
<protein>
    <recommendedName>
        <fullName evidence="1">Holo-[acyl-carrier-protein] synthase</fullName>
        <shortName evidence="1">Holo-ACP synthase</shortName>
        <ecNumber evidence="1">2.7.8.7</ecNumber>
    </recommendedName>
    <alternativeName>
        <fullName evidence="1">4'-phosphopantetheinyl transferase AcpS</fullName>
    </alternativeName>
</protein>
<gene>
    <name evidence="1" type="primary">acpS</name>
    <name type="ordered locus">Lcho_0594</name>
</gene>
<sequence>MIYGVGTDICDIRRIAATLQRRGDRFAERVLGPREIEVFRYRRAKVEARGLSYLATRFSAKEAFSKAIGLGLHQPMSWRSCEILNAPSGQPQIHLHGALADWFAQRRLIAHVSLTDETDYATSFVVVETQGL</sequence>
<organism>
    <name type="scientific">Leptothrix cholodnii (strain ATCC 51168 / LMG 8142 / SP-6)</name>
    <name type="common">Leptothrix discophora (strain SP-6)</name>
    <dbReference type="NCBI Taxonomy" id="395495"/>
    <lineage>
        <taxon>Bacteria</taxon>
        <taxon>Pseudomonadati</taxon>
        <taxon>Pseudomonadota</taxon>
        <taxon>Betaproteobacteria</taxon>
        <taxon>Burkholderiales</taxon>
        <taxon>Sphaerotilaceae</taxon>
        <taxon>Leptothrix</taxon>
    </lineage>
</organism>